<feature type="chain" id="PRO_1000088739" description="Aspartate carbamoyltransferase catalytic subunit">
    <location>
        <begin position="1"/>
        <end position="320"/>
    </location>
</feature>
<feature type="binding site" evidence="1">
    <location>
        <position position="53"/>
    </location>
    <ligand>
        <name>carbamoyl phosphate</name>
        <dbReference type="ChEBI" id="CHEBI:58228"/>
    </ligand>
</feature>
<feature type="binding site" evidence="1">
    <location>
        <position position="54"/>
    </location>
    <ligand>
        <name>carbamoyl phosphate</name>
        <dbReference type="ChEBI" id="CHEBI:58228"/>
    </ligand>
</feature>
<feature type="binding site" evidence="1">
    <location>
        <position position="82"/>
    </location>
    <ligand>
        <name>L-aspartate</name>
        <dbReference type="ChEBI" id="CHEBI:29991"/>
    </ligand>
</feature>
<feature type="binding site" evidence="1">
    <location>
        <position position="103"/>
    </location>
    <ligand>
        <name>carbamoyl phosphate</name>
        <dbReference type="ChEBI" id="CHEBI:58228"/>
    </ligand>
</feature>
<feature type="binding site" evidence="1">
    <location>
        <position position="131"/>
    </location>
    <ligand>
        <name>carbamoyl phosphate</name>
        <dbReference type="ChEBI" id="CHEBI:58228"/>
    </ligand>
</feature>
<feature type="binding site" evidence="1">
    <location>
        <position position="134"/>
    </location>
    <ligand>
        <name>carbamoyl phosphate</name>
        <dbReference type="ChEBI" id="CHEBI:58228"/>
    </ligand>
</feature>
<feature type="binding site" evidence="1">
    <location>
        <position position="164"/>
    </location>
    <ligand>
        <name>L-aspartate</name>
        <dbReference type="ChEBI" id="CHEBI:29991"/>
    </ligand>
</feature>
<feature type="binding site" evidence="1">
    <location>
        <position position="227"/>
    </location>
    <ligand>
        <name>L-aspartate</name>
        <dbReference type="ChEBI" id="CHEBI:29991"/>
    </ligand>
</feature>
<feature type="binding site" evidence="1">
    <location>
        <position position="266"/>
    </location>
    <ligand>
        <name>carbamoyl phosphate</name>
        <dbReference type="ChEBI" id="CHEBI:58228"/>
    </ligand>
</feature>
<feature type="binding site" evidence="1">
    <location>
        <position position="267"/>
    </location>
    <ligand>
        <name>carbamoyl phosphate</name>
        <dbReference type="ChEBI" id="CHEBI:58228"/>
    </ligand>
</feature>
<name>PYRB_BIFLD</name>
<comment type="function">
    <text evidence="1">Catalyzes the condensation of carbamoyl phosphate and aspartate to form carbamoyl aspartate and inorganic phosphate, the committed step in the de novo pyrimidine nucleotide biosynthesis pathway.</text>
</comment>
<comment type="catalytic activity">
    <reaction evidence="1">
        <text>carbamoyl phosphate + L-aspartate = N-carbamoyl-L-aspartate + phosphate + H(+)</text>
        <dbReference type="Rhea" id="RHEA:20013"/>
        <dbReference type="ChEBI" id="CHEBI:15378"/>
        <dbReference type="ChEBI" id="CHEBI:29991"/>
        <dbReference type="ChEBI" id="CHEBI:32814"/>
        <dbReference type="ChEBI" id="CHEBI:43474"/>
        <dbReference type="ChEBI" id="CHEBI:58228"/>
        <dbReference type="EC" id="2.1.3.2"/>
    </reaction>
</comment>
<comment type="pathway">
    <text evidence="1">Pyrimidine metabolism; UMP biosynthesis via de novo pathway; (S)-dihydroorotate from bicarbonate: step 2/3.</text>
</comment>
<comment type="subunit">
    <text evidence="1">Heterododecamer (2C3:3R2) of six catalytic PyrB chains organized as two trimers (C3), and six regulatory PyrI chains organized as three dimers (R2).</text>
</comment>
<comment type="similarity">
    <text evidence="1">Belongs to the aspartate/ornithine carbamoyltransferase superfamily. ATCase family.</text>
</comment>
<proteinExistence type="inferred from homology"/>
<accession>B3DS61</accession>
<dbReference type="EC" id="2.1.3.2" evidence="1"/>
<dbReference type="EMBL" id="CP000605">
    <property type="protein sequence ID" value="ACD97980.1"/>
    <property type="molecule type" value="Genomic_DNA"/>
</dbReference>
<dbReference type="RefSeq" id="WP_007054218.1">
    <property type="nucleotide sequence ID" value="NZ_AABM02000001.1"/>
</dbReference>
<dbReference type="SMR" id="B3DS61"/>
<dbReference type="GeneID" id="69578053"/>
<dbReference type="KEGG" id="blj:BLD_0534"/>
<dbReference type="HOGENOM" id="CLU_043846_1_2_11"/>
<dbReference type="UniPathway" id="UPA00070">
    <property type="reaction ID" value="UER00116"/>
</dbReference>
<dbReference type="Proteomes" id="UP000002419">
    <property type="component" value="Chromosome"/>
</dbReference>
<dbReference type="GO" id="GO:0016597">
    <property type="term" value="F:amino acid binding"/>
    <property type="evidence" value="ECO:0007669"/>
    <property type="project" value="InterPro"/>
</dbReference>
<dbReference type="GO" id="GO:0004070">
    <property type="term" value="F:aspartate carbamoyltransferase activity"/>
    <property type="evidence" value="ECO:0007669"/>
    <property type="project" value="UniProtKB-UniRule"/>
</dbReference>
<dbReference type="GO" id="GO:0006207">
    <property type="term" value="P:'de novo' pyrimidine nucleobase biosynthetic process"/>
    <property type="evidence" value="ECO:0007669"/>
    <property type="project" value="InterPro"/>
</dbReference>
<dbReference type="GO" id="GO:0044205">
    <property type="term" value="P:'de novo' UMP biosynthetic process"/>
    <property type="evidence" value="ECO:0007669"/>
    <property type="project" value="UniProtKB-UniRule"/>
</dbReference>
<dbReference type="GO" id="GO:0006520">
    <property type="term" value="P:amino acid metabolic process"/>
    <property type="evidence" value="ECO:0007669"/>
    <property type="project" value="InterPro"/>
</dbReference>
<dbReference type="FunFam" id="3.40.50.1370:FF:000002">
    <property type="entry name" value="Aspartate carbamoyltransferase 2"/>
    <property type="match status" value="1"/>
</dbReference>
<dbReference type="Gene3D" id="3.40.50.1370">
    <property type="entry name" value="Aspartate/ornithine carbamoyltransferase"/>
    <property type="match status" value="2"/>
</dbReference>
<dbReference type="HAMAP" id="MF_00001">
    <property type="entry name" value="Asp_carb_tr"/>
    <property type="match status" value="1"/>
</dbReference>
<dbReference type="InterPro" id="IPR006132">
    <property type="entry name" value="Asp/Orn_carbamoyltranf_P-bd"/>
</dbReference>
<dbReference type="InterPro" id="IPR006130">
    <property type="entry name" value="Asp/Orn_carbamoylTrfase"/>
</dbReference>
<dbReference type="InterPro" id="IPR036901">
    <property type="entry name" value="Asp/Orn_carbamoylTrfase_sf"/>
</dbReference>
<dbReference type="InterPro" id="IPR002082">
    <property type="entry name" value="Asp_carbamoyltransf"/>
</dbReference>
<dbReference type="InterPro" id="IPR006131">
    <property type="entry name" value="Asp_carbamoyltransf_Asp/Orn-bd"/>
</dbReference>
<dbReference type="NCBIfam" id="TIGR00670">
    <property type="entry name" value="asp_carb_tr"/>
    <property type="match status" value="1"/>
</dbReference>
<dbReference type="NCBIfam" id="NF002032">
    <property type="entry name" value="PRK00856.1"/>
    <property type="match status" value="1"/>
</dbReference>
<dbReference type="PANTHER" id="PTHR45753:SF6">
    <property type="entry name" value="ASPARTATE CARBAMOYLTRANSFERASE"/>
    <property type="match status" value="1"/>
</dbReference>
<dbReference type="PANTHER" id="PTHR45753">
    <property type="entry name" value="ORNITHINE CARBAMOYLTRANSFERASE, MITOCHONDRIAL"/>
    <property type="match status" value="1"/>
</dbReference>
<dbReference type="Pfam" id="PF00185">
    <property type="entry name" value="OTCace"/>
    <property type="match status" value="1"/>
</dbReference>
<dbReference type="Pfam" id="PF02729">
    <property type="entry name" value="OTCace_N"/>
    <property type="match status" value="1"/>
</dbReference>
<dbReference type="PRINTS" id="PR00100">
    <property type="entry name" value="AOTCASE"/>
</dbReference>
<dbReference type="PRINTS" id="PR00101">
    <property type="entry name" value="ATCASE"/>
</dbReference>
<dbReference type="SUPFAM" id="SSF53671">
    <property type="entry name" value="Aspartate/ornithine carbamoyltransferase"/>
    <property type="match status" value="1"/>
</dbReference>
<dbReference type="PROSITE" id="PS00097">
    <property type="entry name" value="CARBAMOYLTRANSFERASE"/>
    <property type="match status" value="1"/>
</dbReference>
<gene>
    <name evidence="1" type="primary">pyrB</name>
    <name type="ordered locus">BLD_0534</name>
</gene>
<organism>
    <name type="scientific">Bifidobacterium longum (strain DJO10A)</name>
    <dbReference type="NCBI Taxonomy" id="205913"/>
    <lineage>
        <taxon>Bacteria</taxon>
        <taxon>Bacillati</taxon>
        <taxon>Actinomycetota</taxon>
        <taxon>Actinomycetes</taxon>
        <taxon>Bifidobacteriales</taxon>
        <taxon>Bifidobacteriaceae</taxon>
        <taxon>Bifidobacterium</taxon>
    </lineage>
</organism>
<protein>
    <recommendedName>
        <fullName evidence="1">Aspartate carbamoyltransferase catalytic subunit</fullName>
        <ecNumber evidence="1">2.1.3.2</ecNumber>
    </recommendedName>
    <alternativeName>
        <fullName evidence="1">Aspartate transcarbamylase</fullName>
        <shortName evidence="1">ATCase</shortName>
    </alternativeName>
</protein>
<keyword id="KW-0665">Pyrimidine biosynthesis</keyword>
<keyword id="KW-0808">Transferase</keyword>
<sequence>MVGKSVVTLDGLSTNQILDLLHKAEYIDSHRKEIAHTCDGRVLATLFYEPSTRTRLSFETAMLRLGGKVIGFAGAQLASVTKGESIADTLKTVSNYVDVVAIRHPKEGAALVASRAASVPVINAGDGGHMHPTQTLADLATLQSRFGRITDLTVGLCGDLTFGRTVHSLIETLCRFGNVRFVLISPDELKTPQYVIDRINATDSCSYVEVRDLASVIGDLDVLYMTRVQKERFFNEDDYLRLRDTYILDEEKLQLAKPSMAVLHPLPRVNEIAVDVDDDPRAAYFEQVKNGMLVRMALESTVVGDELPGYEPLNPKEVQA</sequence>
<evidence type="ECO:0000255" key="1">
    <source>
        <dbReference type="HAMAP-Rule" id="MF_00001"/>
    </source>
</evidence>
<reference key="1">
    <citation type="journal article" date="2008" name="BMC Genomics">
        <title>Comparative genomic analysis of the gut bacterium Bifidobacterium longum reveals loci susceptible to deletion during pure culture growth.</title>
        <authorList>
            <person name="Lee J.H."/>
            <person name="Karamychev V.N."/>
            <person name="Kozyavkin S.A."/>
            <person name="Mills D."/>
            <person name="Pavlov A.R."/>
            <person name="Pavlova N.V."/>
            <person name="Polouchine N.N."/>
            <person name="Richardson P.M."/>
            <person name="Shakhova V.V."/>
            <person name="Slesarev A.I."/>
            <person name="Weimer B."/>
            <person name="O'Sullivan D.J."/>
        </authorList>
    </citation>
    <scope>NUCLEOTIDE SEQUENCE [LARGE SCALE GENOMIC DNA]</scope>
    <source>
        <strain>DJO10A</strain>
    </source>
</reference>